<sequence length="463" mass="52034">MELRAWVLLWRLVLLQSSAVLLSSGPSGPATSDRSVVSESTVSWAAGARAVLRCQSPRMVWTQDRLHDRQRVVHWDLSGSKAGGPARRLVDMYSTGEQRVGEQRLGEQRVGEQRVYEPRDRGRLLLPPSAFHDGNFSLFIRAVEETDEGLYTCNLHHHYCHLYESLAVSLEVTDDPRAAGAHWDGEKEVLAVERGAPALLTCVNRAHVWTDRHLEEAQQVVHWDRQPPGVPHDRADRLLDLYASGERRAYGPPFLRDRVAVEADAFARGDFSLLIDPVEPADEGTYSCHLHHHYCGLHERRVFHLRVTEPAARPPPPPRDSPGNGSSHSGAPGPGARDPTLTRGRSVINVIVPEGRAHFFQQLGYVLATLLLFILLLITVVLATRQRRRGGYEYSNKKSKSKGKDINMAEFAVASGDQSLYRSEDIRLDYKNNILKERAEVAHSLPPAKNIDLDKEFRKEYCK</sequence>
<feature type="signal peptide" evidence="4">
    <location>
        <begin position="1"/>
        <end position="19"/>
    </location>
</feature>
<feature type="chain" id="PRO_0000298664" description="Matrix remodeling-associated protein 8">
    <location>
        <begin position="20"/>
        <end position="463"/>
    </location>
</feature>
<feature type="topological domain" description="Extracellular" evidence="4">
    <location>
        <begin position="20"/>
        <end position="362"/>
    </location>
</feature>
<feature type="transmembrane region" description="Helical" evidence="4">
    <location>
        <begin position="363"/>
        <end position="383"/>
    </location>
</feature>
<feature type="topological domain" description="Cytoplasmic" evidence="4">
    <location>
        <begin position="384"/>
        <end position="463"/>
    </location>
</feature>
<feature type="domain" description="Ig-like V-type 1">
    <location>
        <begin position="29"/>
        <end position="173"/>
    </location>
</feature>
<feature type="domain" description="Ig-like V-type 2">
    <location>
        <begin position="176"/>
        <end position="308"/>
    </location>
</feature>
<feature type="region of interest" description="Disordered" evidence="6">
    <location>
        <begin position="309"/>
        <end position="341"/>
    </location>
</feature>
<feature type="short sequence motif" description="RGD" evidence="3">
    <location>
        <begin position="268"/>
        <end position="270"/>
    </location>
</feature>
<feature type="compositionally biased region" description="Low complexity" evidence="6">
    <location>
        <begin position="321"/>
        <end position="335"/>
    </location>
</feature>
<feature type="site" description="Cleavage" evidence="1">
    <location>
        <begin position="346"/>
        <end position="347"/>
    </location>
</feature>
<feature type="modified residue" description="Phosphoserine" evidence="2">
    <location>
        <position position="244"/>
    </location>
</feature>
<feature type="glycosylation site" description="N-linked (GlcNAc...) asparagine" evidence="4">
    <location>
        <position position="135"/>
    </location>
</feature>
<feature type="glycosylation site" description="N-linked (GlcNAc...) asparagine" evidence="4">
    <location>
        <position position="324"/>
    </location>
</feature>
<feature type="disulfide bond" evidence="5">
    <location>
        <begin position="54"/>
        <end position="153"/>
    </location>
</feature>
<feature type="disulfide bond" evidence="5">
    <location>
        <begin position="202"/>
        <end position="288"/>
    </location>
</feature>
<feature type="strand" evidence="7">
    <location>
        <begin position="39"/>
        <end position="45"/>
    </location>
</feature>
<feature type="strand" evidence="7">
    <location>
        <begin position="50"/>
        <end position="52"/>
    </location>
</feature>
<feature type="helix" evidence="7">
    <location>
        <begin position="57"/>
        <end position="59"/>
    </location>
</feature>
<feature type="helix" evidence="7">
    <location>
        <begin position="64"/>
        <end position="66"/>
    </location>
</feature>
<feature type="strand" evidence="7">
    <location>
        <begin position="71"/>
        <end position="79"/>
    </location>
</feature>
<feature type="turn" evidence="7">
    <location>
        <begin position="80"/>
        <end position="82"/>
    </location>
</feature>
<feature type="strand" evidence="7">
    <location>
        <begin position="86"/>
        <end position="100"/>
    </location>
</feature>
<feature type="strand" evidence="7">
    <location>
        <begin position="103"/>
        <end position="117"/>
    </location>
</feature>
<feature type="helix" evidence="7">
    <location>
        <begin position="118"/>
        <end position="120"/>
    </location>
</feature>
<feature type="turn" evidence="7">
    <location>
        <begin position="121"/>
        <end position="123"/>
    </location>
</feature>
<feature type="helix" evidence="7">
    <location>
        <begin position="130"/>
        <end position="133"/>
    </location>
</feature>
<feature type="strand" evidence="7">
    <location>
        <begin position="138"/>
        <end position="142"/>
    </location>
</feature>
<feature type="helix" evidence="7">
    <location>
        <begin position="145"/>
        <end position="147"/>
    </location>
</feature>
<feature type="strand" evidence="7">
    <location>
        <begin position="149"/>
        <end position="157"/>
    </location>
</feature>
<feature type="turn" evidence="7">
    <location>
        <begin position="158"/>
        <end position="161"/>
    </location>
</feature>
<feature type="strand" evidence="7">
    <location>
        <begin position="162"/>
        <end position="174"/>
    </location>
</feature>
<feature type="helix" evidence="7">
    <location>
        <begin position="176"/>
        <end position="178"/>
    </location>
</feature>
<feature type="strand" evidence="7">
    <location>
        <begin position="180"/>
        <end position="183"/>
    </location>
</feature>
<feature type="strand" evidence="7">
    <location>
        <begin position="185"/>
        <end position="193"/>
    </location>
</feature>
<feature type="strand" evidence="7">
    <location>
        <begin position="198"/>
        <end position="200"/>
    </location>
</feature>
<feature type="turn" evidence="7">
    <location>
        <begin position="207"/>
        <end position="209"/>
    </location>
</feature>
<feature type="strand" evidence="7">
    <location>
        <begin position="220"/>
        <end position="226"/>
    </location>
</feature>
<feature type="helix" evidence="7">
    <location>
        <begin position="232"/>
        <end position="234"/>
    </location>
</feature>
<feature type="strand" evidence="7">
    <location>
        <begin position="236"/>
        <end position="242"/>
    </location>
</feature>
<feature type="strand" evidence="7">
    <location>
        <begin position="247"/>
        <end position="249"/>
    </location>
</feature>
<feature type="helix" evidence="7">
    <location>
        <begin position="253"/>
        <end position="256"/>
    </location>
</feature>
<feature type="turn" evidence="7">
    <location>
        <begin position="265"/>
        <end position="269"/>
    </location>
</feature>
<feature type="strand" evidence="7">
    <location>
        <begin position="273"/>
        <end position="277"/>
    </location>
</feature>
<feature type="helix" evidence="7">
    <location>
        <begin position="280"/>
        <end position="282"/>
    </location>
</feature>
<feature type="strand" evidence="7">
    <location>
        <begin position="284"/>
        <end position="292"/>
    </location>
</feature>
<feature type="helix" evidence="7">
    <location>
        <begin position="293"/>
        <end position="295"/>
    </location>
</feature>
<feature type="strand" evidence="7">
    <location>
        <begin position="297"/>
        <end position="308"/>
    </location>
</feature>
<proteinExistence type="evidence at protein level"/>
<accession>Q148M6</accession>
<protein>
    <recommendedName>
        <fullName>Matrix remodeling-associated protein 8</fullName>
    </recommendedName>
    <alternativeName>
        <fullName>Limitrin</fullName>
    </alternativeName>
</protein>
<reference key="1">
    <citation type="submission" date="2006-06" db="EMBL/GenBank/DDBJ databases">
        <authorList>
            <consortium name="NIH - Mammalian Gene Collection (MGC) project"/>
        </authorList>
    </citation>
    <scope>NUCLEOTIDE SEQUENCE [LARGE SCALE MRNA]</scope>
    <source>
        <strain>Hereford</strain>
        <tissue>Thymus</tissue>
    </source>
</reference>
<keyword id="KW-0002">3D-structure</keyword>
<keyword id="KW-0130">Cell adhesion</keyword>
<keyword id="KW-0965">Cell junction</keyword>
<keyword id="KW-1003">Cell membrane</keyword>
<keyword id="KW-0966">Cell projection</keyword>
<keyword id="KW-0963">Cytoplasm</keyword>
<keyword id="KW-1015">Disulfide bond</keyword>
<keyword id="KW-0325">Glycoprotein</keyword>
<keyword id="KW-0393">Immunoglobulin domain</keyword>
<keyword id="KW-0472">Membrane</keyword>
<keyword id="KW-0539">Nucleus</keyword>
<keyword id="KW-0597">Phosphoprotein</keyword>
<keyword id="KW-1185">Reference proteome</keyword>
<keyword id="KW-0677">Repeat</keyword>
<keyword id="KW-0732">Signal</keyword>
<keyword id="KW-0796">Tight junction</keyword>
<keyword id="KW-0812">Transmembrane</keyword>
<keyword id="KW-1133">Transmembrane helix</keyword>
<comment type="function">
    <text evidence="2 3">Transmembrane protein which can modulate activity of various signaling pathways, probably via binding to integrin ITGAV:ITGB3. Mediates heterophilic cell-cell interactions in vitro. Inhibits osteoclastogenesis downstream of TNFSF11/RANKL and CSF1, where it may function by attenuating signaling via integrin ITGB3 and MAP kinase p38. Plays a role in cartilage formation where it promotes proliferation and maturation of growth plate chondrocytes. Stimulates formation of primary cilia in chondrocytes. Enhances expression of genes involved in the hedgehog signaling pathway in chondrocytes, including the hedgehog signaling molecule IHH; may also promote signaling via the PTHLH/PTHrP pathway. Plays a role in angiogenesis where it suppresses migration of endothelial cells and also promotes their apoptosis. Inhibits VEGF-induced activation of AKT and p38 MAP kinase in endothelial cells. Also inhibits VTN (vitronectin)-mediated integrin ITGAV:ITGB3 signaling and activation of PTK2/FAK. May play a role in the maturation and maintenance of the blood-brain barrier.</text>
</comment>
<comment type="subunit">
    <text evidence="3">Homodimer in cis. Does not appear to form trans-homodimers. Interacts with ITGB3; the interaction inhibits ITGAV:ITGB3 heterodimer formation.</text>
</comment>
<comment type="subcellular location">
    <subcellularLocation>
        <location evidence="3">Cell membrane</location>
        <topology evidence="4">Single-pass type I membrane protein</topology>
    </subcellularLocation>
    <subcellularLocation>
        <location evidence="3">Cell junction</location>
        <location evidence="3">Tight junction</location>
    </subcellularLocation>
    <subcellularLocation>
        <location evidence="3">Cytoplasm</location>
    </subcellularLocation>
    <subcellularLocation>
        <location evidence="3">Cell projection</location>
        <location evidence="3">Cilium membrane</location>
    </subcellularLocation>
    <subcellularLocation>
        <location evidence="3">Nucleus</location>
    </subcellularLocation>
    <text evidence="3">Primarily localizes to the cell membrane. Detected in the cilium of primary chondrocytes. Highly expressed at areas of cell-cell contact and may localize to tight junctions. Also found in the nucleus where it is detected in the soluble (as opposed to chromatin-bound) fraction.</text>
</comment>
<comment type="domain">
    <text evidence="3">The RGD motif is involved in integrin ITGAV:ITGB3 binding.</text>
</comment>
<evidence type="ECO:0000250" key="1">
    <source>
        <dbReference type="UniProtKB" id="Q5XI43"/>
    </source>
</evidence>
<evidence type="ECO:0000250" key="2">
    <source>
        <dbReference type="UniProtKB" id="Q9BRK3"/>
    </source>
</evidence>
<evidence type="ECO:0000250" key="3">
    <source>
        <dbReference type="UniProtKB" id="Q9DBV4"/>
    </source>
</evidence>
<evidence type="ECO:0000255" key="4"/>
<evidence type="ECO:0000255" key="5">
    <source>
        <dbReference type="PROSITE-ProRule" id="PRU00114"/>
    </source>
</evidence>
<evidence type="ECO:0000256" key="6">
    <source>
        <dbReference type="SAM" id="MobiDB-lite"/>
    </source>
</evidence>
<evidence type="ECO:0007829" key="7">
    <source>
        <dbReference type="PDB" id="6ORT"/>
    </source>
</evidence>
<name>MXRA8_BOVIN</name>
<organism>
    <name type="scientific">Bos taurus</name>
    <name type="common">Bovine</name>
    <dbReference type="NCBI Taxonomy" id="9913"/>
    <lineage>
        <taxon>Eukaryota</taxon>
        <taxon>Metazoa</taxon>
        <taxon>Chordata</taxon>
        <taxon>Craniata</taxon>
        <taxon>Vertebrata</taxon>
        <taxon>Euteleostomi</taxon>
        <taxon>Mammalia</taxon>
        <taxon>Eutheria</taxon>
        <taxon>Laurasiatheria</taxon>
        <taxon>Artiodactyla</taxon>
        <taxon>Ruminantia</taxon>
        <taxon>Pecora</taxon>
        <taxon>Bovidae</taxon>
        <taxon>Bovinae</taxon>
        <taxon>Bos</taxon>
    </lineage>
</organism>
<dbReference type="EMBL" id="BC118137">
    <property type="protein sequence ID" value="AAI18138.1"/>
    <property type="molecule type" value="mRNA"/>
</dbReference>
<dbReference type="RefSeq" id="NP_001069298.1">
    <property type="nucleotide sequence ID" value="NM_001075830.1"/>
</dbReference>
<dbReference type="PDB" id="6ORT">
    <property type="method" value="X-ray"/>
    <property type="resolution" value="2.30 A"/>
    <property type="chains" value="A=24-309"/>
</dbReference>
<dbReference type="PDBsum" id="6ORT"/>
<dbReference type="SMR" id="Q148M6"/>
<dbReference type="FunCoup" id="Q148M6">
    <property type="interactions" value="518"/>
</dbReference>
<dbReference type="STRING" id="9913.ENSBTAP00000016253"/>
<dbReference type="GlyCosmos" id="Q148M6">
    <property type="glycosylation" value="2 sites, No reported glycans"/>
</dbReference>
<dbReference type="GlyGen" id="Q148M6">
    <property type="glycosylation" value="2 sites"/>
</dbReference>
<dbReference type="PaxDb" id="9913-ENSBTAP00000016253"/>
<dbReference type="GeneID" id="522392"/>
<dbReference type="KEGG" id="bta:522392"/>
<dbReference type="CTD" id="54587"/>
<dbReference type="eggNOG" id="ENOG502QRZ7">
    <property type="taxonomic scope" value="Eukaryota"/>
</dbReference>
<dbReference type="HOGENOM" id="CLU_062248_1_0_1"/>
<dbReference type="InParanoid" id="Q148M6"/>
<dbReference type="OrthoDB" id="9832369at2759"/>
<dbReference type="TreeFam" id="TF332884"/>
<dbReference type="Proteomes" id="UP000009136">
    <property type="component" value="Unplaced"/>
</dbReference>
<dbReference type="GO" id="GO:0005923">
    <property type="term" value="C:bicellular tight junction"/>
    <property type="evidence" value="ECO:0007669"/>
    <property type="project" value="UniProtKB-SubCell"/>
</dbReference>
<dbReference type="GO" id="GO:0009986">
    <property type="term" value="C:cell surface"/>
    <property type="evidence" value="ECO:0000318"/>
    <property type="project" value="GO_Central"/>
</dbReference>
<dbReference type="GO" id="GO:0060170">
    <property type="term" value="C:ciliary membrane"/>
    <property type="evidence" value="ECO:0007669"/>
    <property type="project" value="UniProtKB-SubCell"/>
</dbReference>
<dbReference type="GO" id="GO:0005737">
    <property type="term" value="C:cytoplasm"/>
    <property type="evidence" value="ECO:0007669"/>
    <property type="project" value="UniProtKB-SubCell"/>
</dbReference>
<dbReference type="GO" id="GO:0005634">
    <property type="term" value="C:nucleus"/>
    <property type="evidence" value="ECO:0007669"/>
    <property type="project" value="UniProtKB-SubCell"/>
</dbReference>
<dbReference type="GO" id="GO:0007155">
    <property type="term" value="P:cell adhesion"/>
    <property type="evidence" value="ECO:0007669"/>
    <property type="project" value="UniProtKB-KW"/>
</dbReference>
<dbReference type="GO" id="GO:0030154">
    <property type="term" value="P:cell differentiation"/>
    <property type="evidence" value="ECO:0000318"/>
    <property type="project" value="GO_Central"/>
</dbReference>
<dbReference type="FunFam" id="2.60.40.10:FF:000806">
    <property type="entry name" value="Matrix remodeling associated 8"/>
    <property type="match status" value="1"/>
</dbReference>
<dbReference type="Gene3D" id="2.60.40.10">
    <property type="entry name" value="Immunoglobulins"/>
    <property type="match status" value="2"/>
</dbReference>
<dbReference type="InterPro" id="IPR007110">
    <property type="entry name" value="Ig-like_dom"/>
</dbReference>
<dbReference type="InterPro" id="IPR036179">
    <property type="entry name" value="Ig-like_dom_sf"/>
</dbReference>
<dbReference type="InterPro" id="IPR013783">
    <property type="entry name" value="Ig-like_fold"/>
</dbReference>
<dbReference type="InterPro" id="IPR003599">
    <property type="entry name" value="Ig_sub"/>
</dbReference>
<dbReference type="InterPro" id="IPR013106">
    <property type="entry name" value="Ig_V-set"/>
</dbReference>
<dbReference type="InterPro" id="IPR042472">
    <property type="entry name" value="MXRA8"/>
</dbReference>
<dbReference type="PANTHER" id="PTHR44793">
    <property type="entry name" value="MATRIX REMODELING-ASSOCIATED PROTEIN 8"/>
    <property type="match status" value="1"/>
</dbReference>
<dbReference type="PANTHER" id="PTHR44793:SF1">
    <property type="entry name" value="MATRIX REMODELING-ASSOCIATED PROTEIN 8"/>
    <property type="match status" value="1"/>
</dbReference>
<dbReference type="Pfam" id="PF07686">
    <property type="entry name" value="V-set"/>
    <property type="match status" value="1"/>
</dbReference>
<dbReference type="SMART" id="SM00409">
    <property type="entry name" value="IG"/>
    <property type="match status" value="2"/>
</dbReference>
<dbReference type="SMART" id="SM00406">
    <property type="entry name" value="IGv"/>
    <property type="match status" value="1"/>
</dbReference>
<dbReference type="SUPFAM" id="SSF48726">
    <property type="entry name" value="Immunoglobulin"/>
    <property type="match status" value="2"/>
</dbReference>
<dbReference type="PROSITE" id="PS50835">
    <property type="entry name" value="IG_LIKE"/>
    <property type="match status" value="2"/>
</dbReference>
<gene>
    <name type="primary">MXRA8</name>
</gene>